<protein>
    <recommendedName>
        <fullName evidence="12">Adhesion G protein-coupled receptor L1</fullName>
    </recommendedName>
    <alternativeName>
        <fullName evidence="2">Calcium-independent alpha-latrotoxin receptor 1</fullName>
        <shortName evidence="2">CIRL-1</shortName>
    </alternativeName>
    <alternativeName>
        <fullName evidence="12">Latrophilin-1</fullName>
    </alternativeName>
    <alternativeName>
        <fullName>Lectomedin-2</fullName>
    </alternativeName>
</protein>
<accession>O94910</accession>
<accession>Q96IE7</accession>
<accession>Q9BU07</accession>
<accession>Q9HAR3</accession>
<proteinExistence type="evidence at protein level"/>
<sequence>MARLAAVLWNLCVTAVLVTSATQGLSRAGLPFGLMRRELACEGYPIELRCPGSDVIMVENANYGRTDDKICDADPFQMENVQCYLPDAFKIMSQRCNNRTQCVVVAGSDAFPDPCPGTYKYLEVQYDCVPYKVEQKVFVCPGTLQKVLEPTSTHESEHQSGAWCKDPLQAGDRIYVMPWIPYRTDTLTEYASWEDYVAARHTTTYRLPNRVDGTGFVVYDGAVFYNKERTRNIVKYDLRTRIKSGETVINTANYHDTSPYRWGGKTDIDLAVDENGLWVIYATEGNNGRLVVSQLNPYTLRFEGTWETGYDKRSASNAFMVCGVLYVLRSVYVDDDSEAAGNRVDYAFNTNANREEPVSLTFPNPYQFISSVDYNPRDNQLYVWNNYFVVRYSLEFGPPDPSAGPATSPPLSTTTTARPTPLTSTASPAATTPLRRAPLTTHPVGAINQLGPDLPPATAPVPSTRRPPAPNLHVSPELFCEPREVRRVQWPATQQGMLVERPCPKGTRGIASFQCLPALGLWNPRGPDLSNCTSPWVNQVAQKIKSGENAANIASELARHTRGSIYAGDVSSSVKLMEQLLDILDAQLQALRPIERESAGKNYNKMHKRERTCKDYIKAVVETVDNLLRPEALESWKDMNATEQVHTATMLLDVLEEGAFLLADNVREPARFLAAKENVVLEVTVLNTEGQVQELVFPQEEYPRKNSIQLSAKTIKQNSRNGVVKVVFILYNNLGLFLSTENATVKLAGEAGPGGPGGASLVVNSQVIAASINKESSRVFLMDPVIFTVAHLEDKNHFNANCSFWNYSERSMLGYWSTQGCRLVESNKTHTTCACSHLTNFAVLMAHREIYQGRINELLLSVITWVGIVISLVCLAICISTFCFLRGLQTDRNTIHKNLCINLFLAELLFLVGIDKTQYEIACPIFAGLLHYFFLAAFSWLCLEGVHLYLLLVEVFESEYSRTKYYYLGGYCFPALVVGIAAAIDYRSYGTEKACWLRVDNYFIWSFIGPVSFVIVVNLVFLMVTLHKMIRSSSVLKPDSSRLDNIKSWALGAIALLFLLGLTWAFGLLFINKESVVMAYLFTTFNAFQGVFIFVFHCALQKKVHKEYSKCLRHSYCCIRSPPGGTHGSLKTSAMRSNTRYYTGTQSRIRRMWNDTVRKQTESSFMAGDINSTPTLNRGTMGNHLLTNPVLQPRGGTSPYNTLIAESVGFNPSSPPVFNSPGSYREPKHPLGGREACGMDTLPLNGNFNNSYSLRSGDFPPGDGGPEPPRGRNLADAAAFEKMIISELVHNNLRGSSSAAKGPPPPEPPVPPVPGGGGEEEAGGPGGADRAEIELLYKALEEPLLLPRAQSVLYQSDLDESESCTAEDGATSRPLSSPPGRDSLYASGANLRDSPSYPDSSPEGPSEALPPPPPAPPGPPEIYYTSRPPALVARNPLQGYYQVRRPSHEGYLAAPGLEGPGPDGDGQMQLVTSL</sequence>
<gene>
    <name evidence="12" type="primary">ADGRL1</name>
    <name evidence="12" type="synonym">KIAA0821</name>
    <name evidence="3" type="synonym">LEC2</name>
    <name evidence="12" type="synonym">LPHN1</name>
</gene>
<reference key="1">
    <citation type="submission" date="2000-09" db="EMBL/GenBank/DDBJ databases">
        <authorList>
            <person name="Douangpanya J."/>
            <person name="Puri K."/>
            <person name="Hayflick J."/>
        </authorList>
    </citation>
    <scope>NUCLEOTIDE SEQUENCE [MRNA] (ISOFORM 2)</scope>
</reference>
<reference key="2">
    <citation type="journal article" date="1998" name="DNA Res.">
        <title>Prediction of the coding sequences of unidentified human genes. XII. The complete sequences of 100 new cDNA clones from brain which code for large proteins in vitro.</title>
        <authorList>
            <person name="Nagase T."/>
            <person name="Ishikawa K."/>
            <person name="Suyama M."/>
            <person name="Kikuno R."/>
            <person name="Hirosawa M."/>
            <person name="Miyajima N."/>
            <person name="Tanaka A."/>
            <person name="Kotani H."/>
            <person name="Nomura N."/>
            <person name="Ohara O."/>
        </authorList>
    </citation>
    <scope>NUCLEOTIDE SEQUENCE [LARGE SCALE MRNA] (ISOFORM 1)</scope>
    <source>
        <tissue>Brain</tissue>
    </source>
</reference>
<reference key="3">
    <citation type="submission" date="2001-07" db="EMBL/GenBank/DDBJ databases">
        <title>Genome-wide discovery and analysis of human seven transmembrane helix receptor genes.</title>
        <authorList>
            <person name="Suwa M."/>
            <person name="Sato T."/>
            <person name="Okouchi I."/>
            <person name="Arita M."/>
            <person name="Futami K."/>
            <person name="Matsumoto S."/>
            <person name="Tsutsumi S."/>
            <person name="Aburatani H."/>
            <person name="Asai K."/>
            <person name="Akiyama Y."/>
        </authorList>
    </citation>
    <scope>NUCLEOTIDE SEQUENCE [GENOMIC DNA]</scope>
</reference>
<reference key="4">
    <citation type="journal article" date="2004" name="Genome Res.">
        <title>The status, quality, and expansion of the NIH full-length cDNA project: the Mammalian Gene Collection (MGC).</title>
        <authorList>
            <consortium name="The MGC Project Team"/>
        </authorList>
    </citation>
    <scope>NUCLEOTIDE SEQUENCE [LARGE SCALE MRNA] OF 636-1474</scope>
    <source>
        <tissue>Brain</tissue>
        <tissue>Lung</tissue>
    </source>
</reference>
<reference key="5">
    <citation type="journal article" date="2004" name="Anal. Chem.">
        <title>Robust phosphoproteomic profiling of tyrosine phosphorylation sites from human T cells using immobilized metal affinity chromatography and tandem mass spectrometry.</title>
        <authorList>
            <person name="Brill L.M."/>
            <person name="Salomon A.R."/>
            <person name="Ficarro S.B."/>
            <person name="Mukherji M."/>
            <person name="Stettler-Gill M."/>
            <person name="Peters E.C."/>
        </authorList>
    </citation>
    <scope>IDENTIFICATION BY MASS SPECTROMETRY [LARGE SCALE ANALYSIS]</scope>
    <source>
        <tissue>Leukemic T-cell</tissue>
    </source>
</reference>
<reference key="6">
    <citation type="journal article" date="2022" name="Am. J. Hum. Genet.">
        <title>ADGRL1 haploinsufficiency causes a variable spectrum of neurodevelopmental disorders in humans and alters synaptic activity and behavior in a mouse model.</title>
        <authorList>
            <person name="Vitobello A."/>
            <person name="Mazel B."/>
            <person name="Lelianova V.G."/>
            <person name="Zangrandi A."/>
            <person name="Petitto E."/>
            <person name="Suckling J."/>
            <person name="Salpietro V."/>
            <person name="Meyer R."/>
            <person name="Elbracht M."/>
            <person name="Kurth I."/>
            <person name="Eggermann T."/>
            <person name="Benlaouer O."/>
            <person name="Lall G."/>
            <person name="Tonevitsky A.G."/>
            <person name="Scott D.A."/>
            <person name="Chan K.M."/>
            <person name="Rosenfeld J.A."/>
            <person name="Nambot S."/>
            <person name="Safraou H."/>
            <person name="Bruel A.L."/>
            <person name="Denomme-Pichon A.S."/>
            <person name="Tran Mau-Them F."/>
            <person name="Philippe C."/>
            <person name="Duffourd Y."/>
            <person name="Guo H."/>
            <person name="Petersen A.K."/>
            <person name="Granger L."/>
            <person name="Crunk A."/>
            <person name="Bayat A."/>
            <person name="Striano P."/>
            <person name="Zara F."/>
            <person name="Scala M."/>
            <person name="Thomas Q."/>
            <person name="Delahaye A."/>
            <person name="de Sainte Agathe J.M."/>
            <person name="Buratti J."/>
            <person name="Kozlov S.V."/>
            <person name="Faivre L."/>
            <person name="Thauvin-Robinet C."/>
            <person name="Ushkaryov Y."/>
        </authorList>
    </citation>
    <scope>VARIANTS DEDBANP 9-TRP--LEU-1474 DEL; 278-TRP--LEU-1474 DEL; CYS-346; ARG-1005; 1136-ARG--LEU-1474 DEL; THR-1152; PHE-1164 AND 1178-ARG--LEU-1474 DEL</scope>
    <scope>CHARACTERIZATION OF VARIANTS DEDBANP 9-TRP--LEU-1474 DEL; ARG-1005; THR-1152 AND PHE-1164</scope>
    <scope>INVOLVEMENT IN DEDBANP</scope>
    <scope>SUBCELLULAR LOCATION</scope>
    <scope>FUNCTION</scope>
</reference>
<organism>
    <name type="scientific">Homo sapiens</name>
    <name type="common">Human</name>
    <dbReference type="NCBI Taxonomy" id="9606"/>
    <lineage>
        <taxon>Eukaryota</taxon>
        <taxon>Metazoa</taxon>
        <taxon>Chordata</taxon>
        <taxon>Craniata</taxon>
        <taxon>Vertebrata</taxon>
        <taxon>Euteleostomi</taxon>
        <taxon>Mammalia</taxon>
        <taxon>Eutheria</taxon>
        <taxon>Euarchontoglires</taxon>
        <taxon>Primates</taxon>
        <taxon>Haplorrhini</taxon>
        <taxon>Catarrhini</taxon>
        <taxon>Hominidae</taxon>
        <taxon>Homo</taxon>
    </lineage>
</organism>
<keyword id="KW-0025">Alternative splicing</keyword>
<keyword id="KW-1268">Autism spectrum disorder</keyword>
<keyword id="KW-0068">Autocatalytic cleavage</keyword>
<keyword id="KW-1003">Cell membrane</keyword>
<keyword id="KW-0966">Cell projection</keyword>
<keyword id="KW-0225">Disease variant</keyword>
<keyword id="KW-1015">Disulfide bond</keyword>
<keyword id="KW-0297">G-protein coupled receptor</keyword>
<keyword id="KW-0325">Glycoprotein</keyword>
<keyword id="KW-0991">Intellectual disability</keyword>
<keyword id="KW-0430">Lectin</keyword>
<keyword id="KW-0472">Membrane</keyword>
<keyword id="KW-0488">Methylation</keyword>
<keyword id="KW-0597">Phosphoprotein</keyword>
<keyword id="KW-1267">Proteomics identification</keyword>
<keyword id="KW-0675">Receptor</keyword>
<keyword id="KW-1185">Reference proteome</keyword>
<keyword id="KW-0732">Signal</keyword>
<keyword id="KW-0770">Synapse</keyword>
<keyword id="KW-0771">Synaptosome</keyword>
<keyword id="KW-0807">Transducer</keyword>
<keyword id="KW-0812">Transmembrane</keyword>
<keyword id="KW-1133">Transmembrane helix</keyword>
<comment type="function">
    <text evidence="2 9">Calcium-independent receptor of high affinity for alpha-latrotoxin, an excitatory neurotoxin present in black widow spider venom which triggers massive exocytosis from neurons and neuroendocrine cells (PubMed:35907405). Receptor for TENM2 that mediates heterophilic synaptic cell-cell contact and postsynaptic specialization. Receptor probably implicated in the regulation of exocytosis (By similarity).</text>
</comment>
<comment type="subunit">
    <text evidence="2 3">Forms a heterodimer, consisting of a large extracellular region (p120) non-covalently linked to a seven-transmembrane moiety (p85). Interacts with syntaxin and with proteins of the SHANK family via the PDZ domain. Interacts (via extracellular domain) with FLRT1, FLRT2 and FLRT3 (via extracellular domain) (By similarity).</text>
</comment>
<comment type="interaction">
    <interactant intactId="EBI-3389315">
        <id>O94910</id>
    </interactant>
    <interactant intactId="EBI-766279">
        <id>O00555</id>
        <label>CACNA1A</label>
    </interactant>
    <organismsDiffer>false</organismsDiffer>
    <experiments>2</experiments>
</comment>
<comment type="subcellular location">
    <subcellularLocation>
        <location evidence="9">Cell membrane</location>
        <topology>Multi-pass membrane protein</topology>
    </subcellularLocation>
    <subcellularLocation>
        <location evidence="2">Cell projection</location>
        <location evidence="2">Axon</location>
    </subcellularLocation>
    <subcellularLocation>
        <location evidence="2">Cell projection</location>
        <location evidence="2">Growth cone</location>
    </subcellularLocation>
    <subcellularLocation>
        <location evidence="2">Synapse</location>
    </subcellularLocation>
    <subcellularLocation>
        <location evidence="2">Presynaptic cell membrane</location>
    </subcellularLocation>
    <subcellularLocation>
        <location evidence="2">Synapse</location>
        <location evidence="2">Synaptosome</location>
    </subcellularLocation>
    <text evidence="2">Colocalizes with TENM2 on the cell surface, across intercellular junctions and on nerve terminals near synaptic clefts.</text>
</comment>
<comment type="alternative products">
    <event type="alternative splicing"/>
    <isoform>
        <id>O94910-1</id>
        <name>1</name>
        <sequence type="displayed"/>
    </isoform>
    <isoform>
        <id>O94910-2</id>
        <name>2</name>
        <sequence type="described" ref="VSP_010099"/>
    </isoform>
</comment>
<comment type="domain">
    <text evidence="1">The extracellular domain coupled to the a single transmembrane region are sufficient for full responsiveness to alpha-latrotoxin.</text>
</comment>
<comment type="PTM">
    <text evidence="2">Autoproteolytically cleaved into 2 subunits, an extracellular subunit and a seven-transmembrane subunit. This proteolytic processing takes place early in the biosynthetic pathway, either in the endoplasmic reticulum or in the early compartment of the Golgi apparatus (By similarity).</text>
</comment>
<comment type="disease" evidence="9">
    <disease id="DI-06517">
        <name>Developmental delay, behavioral abnormalities, and neuropsychiatric disorders</name>
        <acronym>DEDBANP</acronym>
        <description>An autosomal dominant disorder characterized by mild global developmental delay, normal or variably impaired intellectual development, and behavioral or neuropsychiatric disorders, including autism spectrum disorder, attention deficit-hyperactivity disorder, and executive functioning deficits. Additional features may include speech delay, dysmorphic features, hypotonia, sleep disturbances, and seizures.</description>
        <dbReference type="MIM" id="620065"/>
    </disease>
    <text>The disease is caused by variants affecting the gene represented in this entry.</text>
</comment>
<comment type="similarity">
    <text evidence="11">Belongs to the G-protein coupled receptor 2 family. Adhesion G-protein coupled receptor (ADGR) subfamily.</text>
</comment>
<comment type="sequence caution" evidence="11">
    <conflict type="erroneous initiation">
        <sequence resource="EMBL-CDS" id="BAA74844"/>
    </conflict>
    <text>Extended N-terminus.</text>
</comment>
<feature type="signal peptide" evidence="1">
    <location>
        <begin position="1"/>
        <end position="24"/>
    </location>
</feature>
<feature type="chain" id="PRO_0000012907" description="Adhesion G protein-coupled receptor L1">
    <location>
        <begin position="25"/>
        <end position="1474"/>
    </location>
</feature>
<feature type="topological domain" description="Extracellular" evidence="4">
    <location>
        <begin position="25"/>
        <end position="858"/>
    </location>
</feature>
<feature type="transmembrane region" description="Helical; Name=1" evidence="4">
    <location>
        <begin position="859"/>
        <end position="879"/>
    </location>
</feature>
<feature type="topological domain" description="Cytoplasmic" evidence="4">
    <location>
        <begin position="880"/>
        <end position="893"/>
    </location>
</feature>
<feature type="transmembrane region" description="Helical; Name=2" evidence="4">
    <location>
        <begin position="894"/>
        <end position="914"/>
    </location>
</feature>
<feature type="topological domain" description="Extracellular" evidence="4">
    <location>
        <begin position="915"/>
        <end position="920"/>
    </location>
</feature>
<feature type="transmembrane region" description="Helical; Name=3" evidence="4">
    <location>
        <begin position="921"/>
        <end position="941"/>
    </location>
</feature>
<feature type="topological domain" description="Cytoplasmic" evidence="4">
    <location>
        <begin position="942"/>
        <end position="964"/>
    </location>
</feature>
<feature type="transmembrane region" description="Helical; Name=4" evidence="4">
    <location>
        <begin position="965"/>
        <end position="985"/>
    </location>
</feature>
<feature type="topological domain" description="Extracellular" evidence="4">
    <location>
        <begin position="986"/>
        <end position="1002"/>
    </location>
</feature>
<feature type="transmembrane region" description="Helical; Name=5" evidence="4">
    <location>
        <begin position="1003"/>
        <end position="1023"/>
    </location>
</feature>
<feature type="topological domain" description="Cytoplasmic" evidence="4">
    <location>
        <begin position="1024"/>
        <end position="1050"/>
    </location>
</feature>
<feature type="transmembrane region" description="Helical; Name=6" evidence="4">
    <location>
        <begin position="1051"/>
        <end position="1071"/>
    </location>
</feature>
<feature type="topological domain" description="Extracellular" evidence="4">
    <location>
        <begin position="1072"/>
        <end position="1075"/>
    </location>
</feature>
<feature type="transmembrane region" description="Helical; Name=7" evidence="4">
    <location>
        <begin position="1076"/>
        <end position="1096"/>
    </location>
</feature>
<feature type="topological domain" description="Cytoplasmic" evidence="4">
    <location>
        <begin position="1097"/>
        <end position="1474"/>
    </location>
</feature>
<feature type="domain" description="SUEL-type lectin" evidence="6">
    <location>
        <begin position="40"/>
        <end position="129"/>
    </location>
</feature>
<feature type="domain" description="Olfactomedin-like" evidence="7">
    <location>
        <begin position="139"/>
        <end position="398"/>
    </location>
</feature>
<feature type="domain" description="GAIN-B" evidence="5">
    <location>
        <begin position="669"/>
        <end position="851"/>
    </location>
</feature>
<feature type="region of interest" description="Disordered" evidence="8">
    <location>
        <begin position="400"/>
        <end position="434"/>
    </location>
</feature>
<feature type="region of interest" description="GPS" evidence="5">
    <location>
        <begin position="802"/>
        <end position="851"/>
    </location>
</feature>
<feature type="region of interest" description="Disordered" evidence="8">
    <location>
        <begin position="1248"/>
        <end position="1273"/>
    </location>
</feature>
<feature type="region of interest" description="Disordered" evidence="8">
    <location>
        <begin position="1294"/>
        <end position="1328"/>
    </location>
</feature>
<feature type="region of interest" description="Disordered" evidence="8">
    <location>
        <begin position="1360"/>
        <end position="1429"/>
    </location>
</feature>
<feature type="region of interest" description="Disordered" evidence="8">
    <location>
        <begin position="1451"/>
        <end position="1474"/>
    </location>
</feature>
<feature type="compositionally biased region" description="Low complexity" evidence="8">
    <location>
        <begin position="405"/>
        <end position="434"/>
    </location>
</feature>
<feature type="compositionally biased region" description="Pro residues" evidence="8">
    <location>
        <begin position="1302"/>
        <end position="1314"/>
    </location>
</feature>
<feature type="compositionally biased region" description="Pro residues" evidence="8">
    <location>
        <begin position="1408"/>
        <end position="1420"/>
    </location>
</feature>
<feature type="binding site" evidence="3">
    <location>
        <position position="42"/>
    </location>
    <ligand>
        <name>alpha-L-rhamnose</name>
        <dbReference type="ChEBI" id="CHEBI:27907"/>
    </ligand>
</feature>
<feature type="binding site" evidence="3">
    <location>
        <begin position="117"/>
        <end position="120"/>
    </location>
    <ligand>
        <name>alpha-L-rhamnose</name>
        <dbReference type="ChEBI" id="CHEBI:27907"/>
    </ligand>
</feature>
<feature type="site" description="Cleavage; by autolysis" evidence="5">
    <location>
        <begin position="838"/>
        <end position="839"/>
    </location>
</feature>
<feature type="modified residue" description="Omega-N-methylarginine" evidence="3">
    <location>
        <position position="1194"/>
    </location>
</feature>
<feature type="modified residue" description="Phosphoserine" evidence="3">
    <location>
        <position position="1220"/>
    </location>
</feature>
<feature type="modified residue" description="Phosphoserine" evidence="3">
    <location>
        <position position="1473"/>
    </location>
</feature>
<feature type="glycosylation site" description="N-linked (GlcNAc...) asparagine" evidence="4">
    <location>
        <position position="98"/>
    </location>
</feature>
<feature type="glycosylation site" description="N-linked (GlcNAc...) asparagine" evidence="4">
    <location>
        <position position="531"/>
    </location>
</feature>
<feature type="glycosylation site" description="N-linked (GlcNAc...) asparagine" evidence="4">
    <location>
        <position position="640"/>
    </location>
</feature>
<feature type="glycosylation site" description="N-linked (GlcNAc...) asparagine" evidence="4">
    <location>
        <position position="742"/>
    </location>
</feature>
<feature type="glycosylation site" description="N-linked (GlcNAc...) asparagine" evidence="4">
    <location>
        <position position="801"/>
    </location>
</feature>
<feature type="glycosylation site" description="N-linked (GlcNAc...) asparagine" evidence="4">
    <location>
        <position position="806"/>
    </location>
</feature>
<feature type="glycosylation site" description="N-linked (GlcNAc...) asparagine" evidence="4">
    <location>
        <position position="827"/>
    </location>
</feature>
<feature type="disulfide bond" evidence="7">
    <location>
        <begin position="41"/>
        <end position="71"/>
    </location>
</feature>
<feature type="disulfide bond" evidence="7">
    <location>
        <begin position="50"/>
        <end position="128"/>
    </location>
</feature>
<feature type="disulfide bond" evidence="7">
    <location>
        <begin position="83"/>
        <end position="115"/>
    </location>
</feature>
<feature type="disulfide bond" evidence="7">
    <location>
        <begin position="96"/>
        <end position="102"/>
    </location>
</feature>
<feature type="disulfide bond" evidence="7">
    <location>
        <begin position="140"/>
        <end position="322"/>
    </location>
</feature>
<feature type="disulfide bond" evidence="7">
    <location>
        <begin position="480"/>
        <end position="515"/>
    </location>
</feature>
<feature type="disulfide bond" evidence="7">
    <location>
        <begin position="503"/>
        <end position="532"/>
    </location>
</feature>
<feature type="disulfide bond" evidence="5">
    <location>
        <begin position="802"/>
        <end position="833"/>
    </location>
</feature>
<feature type="disulfide bond" evidence="5">
    <location>
        <begin position="821"/>
        <end position="835"/>
    </location>
</feature>
<feature type="splice variant" id="VSP_010099" description="In isoform 2." evidence="10">
    <original>KVEQKV</original>
    <variation>I</variation>
    <location>
        <begin position="132"/>
        <end position="137"/>
    </location>
</feature>
<feature type="sequence variant" id="VAR_087773" description="In DEDBANP; loss of protein expression; loss of G protein-coupled receptor signaling." evidence="9">
    <location>
        <begin position="9"/>
        <end position="1474"/>
    </location>
</feature>
<feature type="sequence variant" id="VAR_087774" description="In DEDBANP." evidence="9">
    <location>
        <begin position="278"/>
        <end position="1474"/>
    </location>
</feature>
<feature type="sequence variant" id="VAR_087775" description="In DEDBANP; uncertain significance." evidence="9">
    <original>Y</original>
    <variation>C</variation>
    <location>
        <position position="346"/>
    </location>
</feature>
<feature type="sequence variant" id="VAR_049463" description="In dbSNP:rs34759320.">
    <original>E</original>
    <variation>Q</variation>
    <location>
        <position position="595"/>
    </location>
</feature>
<feature type="sequence variant" id="VAR_087776" description="In DEDBANP; decreased G protein-coupled receptor signaling." evidence="9">
    <original>W</original>
    <variation>R</variation>
    <location>
        <position position="1005"/>
    </location>
</feature>
<feature type="sequence variant" id="VAR_087777" description="In DEDBANP." evidence="9">
    <location>
        <begin position="1136"/>
        <end position="1474"/>
    </location>
</feature>
<feature type="sequence variant" id="VAR_087778" description="In DEDBANP; decreased G protein-coupled receptor signaling; decreased cell surface localization." evidence="9">
    <original>M</original>
    <variation>T</variation>
    <location>
        <position position="1152"/>
    </location>
</feature>
<feature type="sequence variant" id="VAR_087779" description="In DEDBANP; decreased G protein-coupled receptor signaling; decreased cell surface localization." evidence="9">
    <original>S</original>
    <variation>F</variation>
    <location>
        <position position="1164"/>
    </location>
</feature>
<feature type="sequence variant" id="VAR_087780" description="In DEDBANP." evidence="9">
    <location>
        <begin position="1178"/>
        <end position="1474"/>
    </location>
</feature>
<feature type="sequence conflict" description="In Ref. 4; AAH02974." evidence="11" ref="4">
    <original>E</original>
    <variation>V</variation>
    <location>
        <position position="1321"/>
    </location>
</feature>
<name>AGRL1_HUMAN</name>
<dbReference type="EMBL" id="AF307079">
    <property type="protein sequence ID" value="AAG27461.1"/>
    <property type="molecule type" value="mRNA"/>
</dbReference>
<dbReference type="EMBL" id="AB020628">
    <property type="protein sequence ID" value="BAA74844.2"/>
    <property type="status" value="ALT_INIT"/>
    <property type="molecule type" value="mRNA"/>
</dbReference>
<dbReference type="EMBL" id="AB065919">
    <property type="protein sequence ID" value="BAC06134.1"/>
    <property type="molecule type" value="Genomic_DNA"/>
</dbReference>
<dbReference type="EMBL" id="BC002974">
    <property type="protein sequence ID" value="AAH02974.1"/>
    <property type="molecule type" value="mRNA"/>
</dbReference>
<dbReference type="EMBL" id="BC007587">
    <property type="protein sequence ID" value="AAH07587.1"/>
    <property type="molecule type" value="mRNA"/>
</dbReference>
<dbReference type="CCDS" id="CCDS12307.1">
    <molecule id="O94910-2"/>
</dbReference>
<dbReference type="CCDS" id="CCDS32928.1">
    <molecule id="O94910-1"/>
</dbReference>
<dbReference type="RefSeq" id="NP_001008701.1">
    <molecule id="O94910-1"/>
    <property type="nucleotide sequence ID" value="NM_001008701.3"/>
</dbReference>
<dbReference type="RefSeq" id="NP_055736.2">
    <molecule id="O94910-2"/>
    <property type="nucleotide sequence ID" value="NM_014921.4"/>
</dbReference>
<dbReference type="BMRB" id="O94910"/>
<dbReference type="SMR" id="O94910"/>
<dbReference type="BioGRID" id="116528">
    <property type="interactions" value="80"/>
</dbReference>
<dbReference type="FunCoup" id="O94910">
    <property type="interactions" value="1041"/>
</dbReference>
<dbReference type="IntAct" id="O94910">
    <property type="interactions" value="49"/>
</dbReference>
<dbReference type="MINT" id="O94910"/>
<dbReference type="STRING" id="9606.ENSP00000340688"/>
<dbReference type="MEROPS" id="P02.010"/>
<dbReference type="GlyCosmos" id="O94910">
    <property type="glycosylation" value="8 sites, 1 glycan"/>
</dbReference>
<dbReference type="GlyGen" id="O94910">
    <property type="glycosylation" value="9 sites, 3 N-linked glycans (3 sites), 1 O-linked glycan (1 site)"/>
</dbReference>
<dbReference type="iPTMnet" id="O94910"/>
<dbReference type="PhosphoSitePlus" id="O94910"/>
<dbReference type="SwissPalm" id="O94910"/>
<dbReference type="BioMuta" id="ADGRL1"/>
<dbReference type="jPOST" id="O94910"/>
<dbReference type="MassIVE" id="O94910"/>
<dbReference type="PaxDb" id="9606-ENSP00000340688"/>
<dbReference type="PeptideAtlas" id="O94910"/>
<dbReference type="ProteomicsDB" id="50544">
    <molecule id="O94910-1"/>
</dbReference>
<dbReference type="ProteomicsDB" id="50545">
    <molecule id="O94910-2"/>
</dbReference>
<dbReference type="Antibodypedia" id="13625">
    <property type="antibodies" value="147 antibodies from 28 providers"/>
</dbReference>
<dbReference type="DNASU" id="22859"/>
<dbReference type="Ensembl" id="ENST00000340736.10">
    <molecule id="O94910-1"/>
    <property type="protein sequence ID" value="ENSP00000340688.5"/>
    <property type="gene ID" value="ENSG00000072071.17"/>
</dbReference>
<dbReference type="Ensembl" id="ENST00000361434.8">
    <molecule id="O94910-2"/>
    <property type="protein sequence ID" value="ENSP00000355328.2"/>
    <property type="gene ID" value="ENSG00000072071.17"/>
</dbReference>
<dbReference type="Ensembl" id="ENST00000672190.1">
    <molecule id="O94910-1"/>
    <property type="protein sequence ID" value="ENSP00000500240.1"/>
    <property type="gene ID" value="ENSG00000288324.1"/>
</dbReference>
<dbReference type="Ensembl" id="ENST00000673576.1">
    <molecule id="O94910-2"/>
    <property type="protein sequence ID" value="ENSP00000500478.1"/>
    <property type="gene ID" value="ENSG00000288324.1"/>
</dbReference>
<dbReference type="GeneID" id="22859"/>
<dbReference type="KEGG" id="hsa:22859"/>
<dbReference type="MANE-Select" id="ENST00000361434.8">
    <molecule id="O94910-2"/>
    <property type="protein sequence ID" value="ENSP00000355328.2"/>
    <property type="RefSeq nucleotide sequence ID" value="NM_014921.5"/>
    <property type="RefSeq protein sequence ID" value="NP_055736.2"/>
</dbReference>
<dbReference type="UCSC" id="uc010xnn.3">
    <molecule id="O94910-1"/>
    <property type="organism name" value="human"/>
</dbReference>
<dbReference type="AGR" id="HGNC:20973"/>
<dbReference type="CTD" id="22859"/>
<dbReference type="DisGeNET" id="22859"/>
<dbReference type="GeneCards" id="ADGRL1"/>
<dbReference type="HGNC" id="HGNC:20973">
    <property type="gene designation" value="ADGRL1"/>
</dbReference>
<dbReference type="HPA" id="ENSG00000072071">
    <property type="expression patterns" value="Tissue enhanced (brain)"/>
</dbReference>
<dbReference type="MalaCards" id="ADGRL1"/>
<dbReference type="MIM" id="616416">
    <property type="type" value="gene"/>
</dbReference>
<dbReference type="MIM" id="620065">
    <property type="type" value="phenotype"/>
</dbReference>
<dbReference type="neXtProt" id="NX_O94910"/>
<dbReference type="OpenTargets" id="ENSG00000072071"/>
<dbReference type="Orphanet" id="528084">
    <property type="disease" value="Non-specific syndromic intellectual disability"/>
</dbReference>
<dbReference type="PharmGKB" id="PA134868822"/>
<dbReference type="VEuPathDB" id="HostDB:ENSG00000072071"/>
<dbReference type="eggNOG" id="KOG3545">
    <property type="taxonomic scope" value="Eukaryota"/>
</dbReference>
<dbReference type="eggNOG" id="KOG4193">
    <property type="taxonomic scope" value="Eukaryota"/>
</dbReference>
<dbReference type="eggNOG" id="KOG4729">
    <property type="taxonomic scope" value="Eukaryota"/>
</dbReference>
<dbReference type="GeneTree" id="ENSGT00940000159684"/>
<dbReference type="HOGENOM" id="CLU_002753_1_1_1"/>
<dbReference type="InParanoid" id="O94910"/>
<dbReference type="OMA" id="SPPWARV"/>
<dbReference type="OrthoDB" id="1100386at2759"/>
<dbReference type="PAN-GO" id="O94910">
    <property type="GO annotations" value="8 GO annotations based on evolutionary models"/>
</dbReference>
<dbReference type="PhylomeDB" id="O94910"/>
<dbReference type="TreeFam" id="TF351999"/>
<dbReference type="PathwayCommons" id="O94910"/>
<dbReference type="SignaLink" id="O94910"/>
<dbReference type="BioGRID-ORCS" id="22859">
    <property type="hits" value="13 hits in 1150 CRISPR screens"/>
</dbReference>
<dbReference type="CD-CODE" id="FB4E32DD">
    <property type="entry name" value="Presynaptic clusters and postsynaptic densities"/>
</dbReference>
<dbReference type="ChiTaRS" id="ADGRL1">
    <property type="organism name" value="human"/>
</dbReference>
<dbReference type="GeneWiki" id="LPHN1"/>
<dbReference type="GenomeRNAi" id="22859"/>
<dbReference type="Pharos" id="O94910">
    <property type="development level" value="Tbio"/>
</dbReference>
<dbReference type="PRO" id="PR:O94910"/>
<dbReference type="Proteomes" id="UP000005640">
    <property type="component" value="Chromosome 19"/>
</dbReference>
<dbReference type="RNAct" id="O94910">
    <property type="molecule type" value="protein"/>
</dbReference>
<dbReference type="Bgee" id="ENSG00000072071">
    <property type="expression patterns" value="Expressed in right hemisphere of cerebellum and 99 other cell types or tissues"/>
</dbReference>
<dbReference type="ExpressionAtlas" id="O94910">
    <property type="expression patterns" value="baseline and differential"/>
</dbReference>
<dbReference type="GO" id="GO:0030424">
    <property type="term" value="C:axon"/>
    <property type="evidence" value="ECO:0000250"/>
    <property type="project" value="UniProtKB"/>
</dbReference>
<dbReference type="GO" id="GO:0030426">
    <property type="term" value="C:growth cone"/>
    <property type="evidence" value="ECO:0000250"/>
    <property type="project" value="UniProtKB"/>
</dbReference>
<dbReference type="GO" id="GO:0016020">
    <property type="term" value="C:membrane"/>
    <property type="evidence" value="ECO:0000304"/>
    <property type="project" value="GDB"/>
</dbReference>
<dbReference type="GO" id="GO:0043005">
    <property type="term" value="C:neuron projection"/>
    <property type="evidence" value="ECO:0000250"/>
    <property type="project" value="UniProtKB"/>
</dbReference>
<dbReference type="GO" id="GO:0005886">
    <property type="term" value="C:plasma membrane"/>
    <property type="evidence" value="ECO:0000250"/>
    <property type="project" value="UniProtKB"/>
</dbReference>
<dbReference type="GO" id="GO:0042734">
    <property type="term" value="C:presynaptic membrane"/>
    <property type="evidence" value="ECO:0000250"/>
    <property type="project" value="UniProtKB"/>
</dbReference>
<dbReference type="GO" id="GO:0045202">
    <property type="term" value="C:synapse"/>
    <property type="evidence" value="ECO:0000250"/>
    <property type="project" value="UniProtKB"/>
</dbReference>
<dbReference type="GO" id="GO:0030246">
    <property type="term" value="F:carbohydrate binding"/>
    <property type="evidence" value="ECO:0007669"/>
    <property type="project" value="UniProtKB-KW"/>
</dbReference>
<dbReference type="GO" id="GO:0050839">
    <property type="term" value="F:cell adhesion molecule binding"/>
    <property type="evidence" value="ECO:0000250"/>
    <property type="project" value="UniProtKB"/>
</dbReference>
<dbReference type="GO" id="GO:0004930">
    <property type="term" value="F:G protein-coupled receptor activity"/>
    <property type="evidence" value="ECO:0000318"/>
    <property type="project" value="GO_Central"/>
</dbReference>
<dbReference type="GO" id="GO:0016524">
    <property type="term" value="F:latrotoxin receptor activity"/>
    <property type="evidence" value="ECO:0000250"/>
    <property type="project" value="UniProtKB"/>
</dbReference>
<dbReference type="GO" id="GO:0007189">
    <property type="term" value="P:adenylate cyclase-activating G protein-coupled receptor signaling pathway"/>
    <property type="evidence" value="ECO:0000318"/>
    <property type="project" value="GO_Central"/>
</dbReference>
<dbReference type="GO" id="GO:0007166">
    <property type="term" value="P:cell surface receptor signaling pathway"/>
    <property type="evidence" value="ECO:0007669"/>
    <property type="project" value="InterPro"/>
</dbReference>
<dbReference type="GO" id="GO:0007186">
    <property type="term" value="P:G protein-coupled receptor signaling pathway"/>
    <property type="evidence" value="ECO:0000304"/>
    <property type="project" value="GDB"/>
</dbReference>
<dbReference type="CDD" id="cd16007">
    <property type="entry name" value="7tmB2_Latrophilin-1"/>
    <property type="match status" value="1"/>
</dbReference>
<dbReference type="CDD" id="cd22844">
    <property type="entry name" value="Gal_Rha_Lectin_LPHN1"/>
    <property type="match status" value="1"/>
</dbReference>
<dbReference type="FunFam" id="1.20.1070.10:FF:000011">
    <property type="entry name" value="Adhesion G protein-coupled receptor L2"/>
    <property type="match status" value="1"/>
</dbReference>
<dbReference type="FunFam" id="1.25.40.610:FF:000001">
    <property type="entry name" value="Adhesion G protein-coupled receptor L2"/>
    <property type="match status" value="1"/>
</dbReference>
<dbReference type="FunFam" id="2.60.120.740:FF:000001">
    <property type="entry name" value="Adhesion G protein-coupled receptor L2"/>
    <property type="match status" value="1"/>
</dbReference>
<dbReference type="FunFam" id="2.60.220.50:FF:000001">
    <property type="entry name" value="Adhesion G protein-coupled receptor L2"/>
    <property type="match status" value="1"/>
</dbReference>
<dbReference type="FunFam" id="4.10.1240.10:FF:000001">
    <property type="entry name" value="Adhesion G protein-coupled receptor L2"/>
    <property type="match status" value="1"/>
</dbReference>
<dbReference type="Gene3D" id="1.25.40.610">
    <property type="match status" value="1"/>
</dbReference>
<dbReference type="Gene3D" id="2.60.120.740">
    <property type="match status" value="1"/>
</dbReference>
<dbReference type="Gene3D" id="2.60.220.50">
    <property type="match status" value="1"/>
</dbReference>
<dbReference type="Gene3D" id="4.10.1240.10">
    <property type="entry name" value="GPCR, family 2, extracellular hormone receptor domain"/>
    <property type="match status" value="1"/>
</dbReference>
<dbReference type="Gene3D" id="1.20.1070.10">
    <property type="entry name" value="Rhodopsin 7-helix transmembrane proteins"/>
    <property type="match status" value="1"/>
</dbReference>
<dbReference type="InterPro" id="IPR057244">
    <property type="entry name" value="GAIN_B"/>
</dbReference>
<dbReference type="InterPro" id="IPR032471">
    <property type="entry name" value="GAIN_dom_N"/>
</dbReference>
<dbReference type="InterPro" id="IPR046338">
    <property type="entry name" value="GAIN_dom_sf"/>
</dbReference>
<dbReference type="InterPro" id="IPR017981">
    <property type="entry name" value="GPCR_2-like_7TM"/>
</dbReference>
<dbReference type="InterPro" id="IPR036445">
    <property type="entry name" value="GPCR_2_extracell_dom_sf"/>
</dbReference>
<dbReference type="InterPro" id="IPR001879">
    <property type="entry name" value="GPCR_2_extracellular_dom"/>
</dbReference>
<dbReference type="InterPro" id="IPR003924">
    <property type="entry name" value="GPCR_2_latrophilin"/>
</dbReference>
<dbReference type="InterPro" id="IPR003334">
    <property type="entry name" value="GPCR_2_latrophilin_rcpt_C"/>
</dbReference>
<dbReference type="InterPro" id="IPR000832">
    <property type="entry name" value="GPCR_2_secretin-like"/>
</dbReference>
<dbReference type="InterPro" id="IPR017983">
    <property type="entry name" value="GPCR_2_secretin-like_CS"/>
</dbReference>
<dbReference type="InterPro" id="IPR000203">
    <property type="entry name" value="GPS"/>
</dbReference>
<dbReference type="InterPro" id="IPR031234">
    <property type="entry name" value="Latrophilin-1_TM"/>
</dbReference>
<dbReference type="InterPro" id="IPR000922">
    <property type="entry name" value="Lectin_gal-bd_dom"/>
</dbReference>
<dbReference type="InterPro" id="IPR043159">
    <property type="entry name" value="Lectin_gal-bd_sf"/>
</dbReference>
<dbReference type="InterPro" id="IPR003112">
    <property type="entry name" value="Olfac-like_dom"/>
</dbReference>
<dbReference type="PANTHER" id="PTHR12011:SF62">
    <property type="entry name" value="ADHESION G PROTEIN-COUPLED RECEPTOR L1"/>
    <property type="match status" value="1"/>
</dbReference>
<dbReference type="PANTHER" id="PTHR12011">
    <property type="entry name" value="ADHESION G-PROTEIN COUPLED RECEPTOR"/>
    <property type="match status" value="1"/>
</dbReference>
<dbReference type="Pfam" id="PF00002">
    <property type="entry name" value="7tm_2"/>
    <property type="match status" value="1"/>
</dbReference>
<dbReference type="Pfam" id="PF16489">
    <property type="entry name" value="GAIN"/>
    <property type="match status" value="1"/>
</dbReference>
<dbReference type="Pfam" id="PF01825">
    <property type="entry name" value="GPS"/>
    <property type="match status" value="1"/>
</dbReference>
<dbReference type="Pfam" id="PF02793">
    <property type="entry name" value="HRM"/>
    <property type="match status" value="1"/>
</dbReference>
<dbReference type="Pfam" id="PF02354">
    <property type="entry name" value="Latrophilin"/>
    <property type="match status" value="1"/>
</dbReference>
<dbReference type="Pfam" id="PF02191">
    <property type="entry name" value="OLF"/>
    <property type="match status" value="1"/>
</dbReference>
<dbReference type="Pfam" id="PF02140">
    <property type="entry name" value="SUEL_Lectin"/>
    <property type="match status" value="1"/>
</dbReference>
<dbReference type="PRINTS" id="PR00249">
    <property type="entry name" value="GPCRSECRETIN"/>
</dbReference>
<dbReference type="PRINTS" id="PR01444">
    <property type="entry name" value="LATROPHILIN"/>
</dbReference>
<dbReference type="SMART" id="SM00303">
    <property type="entry name" value="GPS"/>
    <property type="match status" value="1"/>
</dbReference>
<dbReference type="SMART" id="SM00008">
    <property type="entry name" value="HormR"/>
    <property type="match status" value="1"/>
</dbReference>
<dbReference type="SMART" id="SM00284">
    <property type="entry name" value="OLF"/>
    <property type="match status" value="1"/>
</dbReference>
<dbReference type="SUPFAM" id="SSF81321">
    <property type="entry name" value="Family A G protein-coupled receptor-like"/>
    <property type="match status" value="1"/>
</dbReference>
<dbReference type="PROSITE" id="PS00650">
    <property type="entry name" value="G_PROTEIN_RECEP_F2_2"/>
    <property type="match status" value="1"/>
</dbReference>
<dbReference type="PROSITE" id="PS50227">
    <property type="entry name" value="G_PROTEIN_RECEP_F2_3"/>
    <property type="match status" value="1"/>
</dbReference>
<dbReference type="PROSITE" id="PS50261">
    <property type="entry name" value="G_PROTEIN_RECEP_F2_4"/>
    <property type="match status" value="1"/>
</dbReference>
<dbReference type="PROSITE" id="PS50221">
    <property type="entry name" value="GAIN_B"/>
    <property type="match status" value="1"/>
</dbReference>
<dbReference type="PROSITE" id="PS51132">
    <property type="entry name" value="OLF"/>
    <property type="match status" value="1"/>
</dbReference>
<dbReference type="PROSITE" id="PS50228">
    <property type="entry name" value="SUEL_LECTIN"/>
    <property type="match status" value="1"/>
</dbReference>
<evidence type="ECO:0000250" key="1"/>
<evidence type="ECO:0000250" key="2">
    <source>
        <dbReference type="UniProtKB" id="O88917"/>
    </source>
</evidence>
<evidence type="ECO:0000250" key="3">
    <source>
        <dbReference type="UniProtKB" id="Q80TR1"/>
    </source>
</evidence>
<evidence type="ECO:0000255" key="4"/>
<evidence type="ECO:0000255" key="5">
    <source>
        <dbReference type="PROSITE-ProRule" id="PRU00098"/>
    </source>
</evidence>
<evidence type="ECO:0000255" key="6">
    <source>
        <dbReference type="PROSITE-ProRule" id="PRU00260"/>
    </source>
</evidence>
<evidence type="ECO:0000255" key="7">
    <source>
        <dbReference type="PROSITE-ProRule" id="PRU00446"/>
    </source>
</evidence>
<evidence type="ECO:0000256" key="8">
    <source>
        <dbReference type="SAM" id="MobiDB-lite"/>
    </source>
</evidence>
<evidence type="ECO:0000269" key="9">
    <source>
    </source>
</evidence>
<evidence type="ECO:0000303" key="10">
    <source ref="1"/>
</evidence>
<evidence type="ECO:0000305" key="11"/>
<evidence type="ECO:0000312" key="12">
    <source>
        <dbReference type="HGNC" id="HGNC:20973"/>
    </source>
</evidence>